<dbReference type="EC" id="2.7.11.1" evidence="8"/>
<dbReference type="EMBL" id="NYMT01000009">
    <property type="protein sequence ID" value="PKC46465.1"/>
    <property type="molecule type" value="Genomic_DNA"/>
</dbReference>
<dbReference type="SMR" id="A0A2I0BVG8"/>
<dbReference type="VEuPathDB" id="PlasmoDB:PfNF54_020022100"/>
<dbReference type="Proteomes" id="UP000232684">
    <property type="component" value="Unassembled WGS sequence"/>
</dbReference>
<dbReference type="GO" id="GO:0005737">
    <property type="term" value="C:cytoplasm"/>
    <property type="evidence" value="ECO:0000315"/>
    <property type="project" value="UniProtKB"/>
</dbReference>
<dbReference type="GO" id="GO:0020002">
    <property type="term" value="C:host cell plasma membrane"/>
    <property type="evidence" value="ECO:0007669"/>
    <property type="project" value="UniProtKB-SubCell"/>
</dbReference>
<dbReference type="GO" id="GO:0005886">
    <property type="term" value="C:plasma membrane"/>
    <property type="evidence" value="ECO:0000315"/>
    <property type="project" value="UniProtKB"/>
</dbReference>
<dbReference type="GO" id="GO:0036126">
    <property type="term" value="C:sperm flagellum"/>
    <property type="evidence" value="ECO:0000315"/>
    <property type="project" value="UniProtKB"/>
</dbReference>
<dbReference type="GO" id="GO:0020005">
    <property type="term" value="C:symbiont-containing vacuole membrane"/>
    <property type="evidence" value="ECO:0007669"/>
    <property type="project" value="UniProtKB-SubCell"/>
</dbReference>
<dbReference type="GO" id="GO:0005524">
    <property type="term" value="F:ATP binding"/>
    <property type="evidence" value="ECO:0007669"/>
    <property type="project" value="UniProtKB-KW"/>
</dbReference>
<dbReference type="GO" id="GO:0005509">
    <property type="term" value="F:calcium ion binding"/>
    <property type="evidence" value="ECO:0007669"/>
    <property type="project" value="InterPro"/>
</dbReference>
<dbReference type="GO" id="GO:0009931">
    <property type="term" value="F:calcium-dependent protein serine/threonine kinase activity"/>
    <property type="evidence" value="ECO:0000314"/>
    <property type="project" value="UniProtKB"/>
</dbReference>
<dbReference type="GO" id="GO:0007292">
    <property type="term" value="P:female gamete generation"/>
    <property type="evidence" value="ECO:0000315"/>
    <property type="project" value="UniProtKB"/>
</dbReference>
<dbReference type="GO" id="GO:0048232">
    <property type="term" value="P:male gamete generation"/>
    <property type="evidence" value="ECO:0000315"/>
    <property type="project" value="UniProtKB"/>
</dbReference>
<dbReference type="CDD" id="cd00051">
    <property type="entry name" value="EFh"/>
    <property type="match status" value="1"/>
</dbReference>
<dbReference type="CDD" id="cd05117">
    <property type="entry name" value="STKc_CAMK"/>
    <property type="match status" value="1"/>
</dbReference>
<dbReference type="FunFam" id="1.10.510.10:FF:000398">
    <property type="entry name" value="Calcium-dependent protein kinase 1"/>
    <property type="match status" value="1"/>
</dbReference>
<dbReference type="FunFam" id="3.30.200.20:FF:000696">
    <property type="entry name" value="Calcium-dependent protein kinase 1"/>
    <property type="match status" value="1"/>
</dbReference>
<dbReference type="FunFam" id="1.10.238.10:FF:000001">
    <property type="entry name" value="Calmodulin 1"/>
    <property type="match status" value="1"/>
</dbReference>
<dbReference type="Gene3D" id="1.10.238.10">
    <property type="entry name" value="EF-hand"/>
    <property type="match status" value="2"/>
</dbReference>
<dbReference type="Gene3D" id="3.30.200.20">
    <property type="entry name" value="Phosphorylase Kinase, domain 1"/>
    <property type="match status" value="1"/>
</dbReference>
<dbReference type="Gene3D" id="1.10.510.10">
    <property type="entry name" value="Transferase(Phosphotransferase) domain 1"/>
    <property type="match status" value="1"/>
</dbReference>
<dbReference type="InterPro" id="IPR050205">
    <property type="entry name" value="CDPK_Ser/Thr_kinases"/>
</dbReference>
<dbReference type="InterPro" id="IPR011992">
    <property type="entry name" value="EF-hand-dom_pair"/>
</dbReference>
<dbReference type="InterPro" id="IPR018247">
    <property type="entry name" value="EF_Hand_1_Ca_BS"/>
</dbReference>
<dbReference type="InterPro" id="IPR002048">
    <property type="entry name" value="EF_hand_dom"/>
</dbReference>
<dbReference type="InterPro" id="IPR011009">
    <property type="entry name" value="Kinase-like_dom_sf"/>
</dbReference>
<dbReference type="InterPro" id="IPR000719">
    <property type="entry name" value="Prot_kinase_dom"/>
</dbReference>
<dbReference type="InterPro" id="IPR017441">
    <property type="entry name" value="Protein_kinase_ATP_BS"/>
</dbReference>
<dbReference type="InterPro" id="IPR008271">
    <property type="entry name" value="Ser/Thr_kinase_AS"/>
</dbReference>
<dbReference type="PANTHER" id="PTHR24349">
    <property type="entry name" value="SERINE/THREONINE-PROTEIN KINASE"/>
    <property type="match status" value="1"/>
</dbReference>
<dbReference type="Pfam" id="PF13499">
    <property type="entry name" value="EF-hand_7"/>
    <property type="match status" value="2"/>
</dbReference>
<dbReference type="Pfam" id="PF00069">
    <property type="entry name" value="Pkinase"/>
    <property type="match status" value="1"/>
</dbReference>
<dbReference type="SMART" id="SM00054">
    <property type="entry name" value="EFh"/>
    <property type="match status" value="4"/>
</dbReference>
<dbReference type="SMART" id="SM00220">
    <property type="entry name" value="S_TKc"/>
    <property type="match status" value="1"/>
</dbReference>
<dbReference type="SUPFAM" id="SSF47473">
    <property type="entry name" value="EF-hand"/>
    <property type="match status" value="1"/>
</dbReference>
<dbReference type="SUPFAM" id="SSF56112">
    <property type="entry name" value="Protein kinase-like (PK-like)"/>
    <property type="match status" value="1"/>
</dbReference>
<dbReference type="PROSITE" id="PS00018">
    <property type="entry name" value="EF_HAND_1"/>
    <property type="match status" value="4"/>
</dbReference>
<dbReference type="PROSITE" id="PS50222">
    <property type="entry name" value="EF_HAND_2"/>
    <property type="match status" value="4"/>
</dbReference>
<dbReference type="PROSITE" id="PS00107">
    <property type="entry name" value="PROTEIN_KINASE_ATP"/>
    <property type="match status" value="1"/>
</dbReference>
<dbReference type="PROSITE" id="PS50011">
    <property type="entry name" value="PROTEIN_KINASE_DOM"/>
    <property type="match status" value="1"/>
</dbReference>
<dbReference type="PROSITE" id="PS00108">
    <property type="entry name" value="PROTEIN_KINASE_ST"/>
    <property type="match status" value="1"/>
</dbReference>
<comment type="function">
    <text evidence="1 2 8 9">Calcium-dependent protein kinase which acts as a sensor and effector of intracellular Ca(2+) levels probably in part downstream of cGMP-activated PKG kinase (PubMed:27923926). By phosphorylating various proteins, required for microneme secretion and thus merozoite egress from and invasion of host erythrocytes (By similarity). During gametogenesis, essential for the development of both male and female gametes (PubMed:29311293). Phosphorylates SERA5 p50 which enhances SERA5 p50 protease activity; however, SERA5 p50 protease activity has been shown in other studies to be controversial. Probably by phosphorylating SERA5 p50, plays a role in merozoite egress from host erythrocytes. Probably prior or during merozoite invasion of host erythrocytes, phosphorylates rhoptry protein RhopH3 which is required for RhopH3 localization to rhoptries and for its secretion. Probably in late schizonts, phosphorylates myosin A tail domain-interacting protein MTIP and glideosome-associated protein 45 GAP45, both of which are components of the motor complex that generates the force required by the parasite to invade host cells. In late schizonts, phosphorylates inner membrane complex protein IMC1g. In late schizonts, phosphorylates PKA regulatory subunit PKAr in a calcium-dependent manner, which may contribute to the dissociation of regulatory PKAr and catalytic PKAc subunits and promote the activation of PKAc. May phosphorylate raf kinase inhibitory protein RKIP which in turn may regulate CDPK1 catalytic activity (By similarity). May phosphorylate proteins of the host erythrocyte membranes (By similarity).</text>
</comment>
<comment type="catalytic activity">
    <reaction evidence="8">
        <text>L-seryl-[protein] + ATP = O-phospho-L-seryl-[protein] + ADP + H(+)</text>
        <dbReference type="Rhea" id="RHEA:17989"/>
        <dbReference type="Rhea" id="RHEA-COMP:9863"/>
        <dbReference type="Rhea" id="RHEA-COMP:11604"/>
        <dbReference type="ChEBI" id="CHEBI:15378"/>
        <dbReference type="ChEBI" id="CHEBI:29999"/>
        <dbReference type="ChEBI" id="CHEBI:30616"/>
        <dbReference type="ChEBI" id="CHEBI:83421"/>
        <dbReference type="ChEBI" id="CHEBI:456216"/>
        <dbReference type="EC" id="2.7.11.1"/>
    </reaction>
</comment>
<comment type="catalytic activity">
    <reaction evidence="8">
        <text>L-threonyl-[protein] + ATP = O-phospho-L-threonyl-[protein] + ADP + H(+)</text>
        <dbReference type="Rhea" id="RHEA:46608"/>
        <dbReference type="Rhea" id="RHEA-COMP:11060"/>
        <dbReference type="Rhea" id="RHEA-COMP:11605"/>
        <dbReference type="ChEBI" id="CHEBI:15378"/>
        <dbReference type="ChEBI" id="CHEBI:30013"/>
        <dbReference type="ChEBI" id="CHEBI:30616"/>
        <dbReference type="ChEBI" id="CHEBI:61977"/>
        <dbReference type="ChEBI" id="CHEBI:456216"/>
        <dbReference type="EC" id="2.7.11.1"/>
    </reaction>
</comment>
<comment type="cofactor">
    <cofactor evidence="8">
        <name>Mg(2+)</name>
        <dbReference type="ChEBI" id="CHEBI:18420"/>
    </cofactor>
</comment>
<comment type="activity regulation">
    <text evidence="2 8">Activated by calcium (PubMed:27923926). Upon calcium binding to the EF-hand domains, the C-terminus of the junction domain (J domain) undergoes a conformational change which results in the dissociation of the pseudo-substrate inhibitory motif from the catalytic domain. This, in turn may facilitate the autophosphorylation of the activation loop at Thr-231, which leads to the kinase activation (By similarity).</text>
</comment>
<comment type="subunit">
    <text evidence="2">Monomer. Forms a high molecular weight (250 and 400 kDa) complex. Forms a complex composed of CDPK1, PKA regulatory subunit PKAr and 14-3-3I; the complex is formed in merozoites in response to low extracellular level of K(+) and may play a role in microneme secretion. Interacts (when phosphorylated) with 14-3-3I in a Ca(2+)-independent manner; the interaction does not regulate CDPK1 catalytic activity but is required for merozoite invasion of host erythrocytes. Interacts with PKA regulatory subunit PKAr; in a Ca(2+)-dependent manner. Interacts with SERA5 p50 in the late schizont stage. Interacts with inner membrane complex protein IMC1g in late schizonts. Interacts with rhoptry protein RhopH3 in merozoites.</text>
</comment>
<comment type="subcellular location">
    <subcellularLocation>
        <location evidence="2">Membrane</location>
        <topology evidence="2">Lipid-anchor</topology>
    </subcellularLocation>
    <subcellularLocation>
        <location evidence="9">Cell membrane</location>
        <topology evidence="2">Lipid-anchor</topology>
        <orientation evidence="2">Cytoplasmic side</orientation>
    </subcellularLocation>
    <subcellularLocation>
        <location evidence="2">Parasitophorous vacuole membrane</location>
        <topology evidence="2">Lipid-anchor</topology>
    </subcellularLocation>
    <subcellularLocation>
        <location evidence="9">Cytoplasm</location>
    </subcellularLocation>
    <subcellularLocation>
        <location evidence="9">Cell projection</location>
        <location evidence="9">Cilium</location>
        <location evidence="9">Flagellum</location>
    </subcellularLocation>
    <subcellularLocation>
        <location evidence="2">Host cell membrane</location>
        <topology evidence="2">Lipid-anchor</topology>
    </subcellularLocation>
    <text evidence="1 2 9">Localizes to the host erythrocytic membrane at low level (By similarity). Localizes to the cell membrane in the nascent merozoites contained within the late-stage schizonts and in free merozoites. Colocalizes with MTIP around developing merozoites in segmented schizonts, also localizes in membranes around the mature food vacuole/residual body of the schizonts. Ser-64 phosphorylated form localizes at the apical pole in punctate structures in merozoites within late schizonts in free merozoites. In trophozoites and schizonts, localizes to the parasitophorous vacuole (PV) and in membranous systems derived from the PV including intraparasitic vacuoles and the tubovesicular system, an extension of the parasitophorous vacuole membrane into the host cell cytoplasm. Localization to the cytoplasm in trophozoite or schizonts is minimal (By similarity). In female stage V gametocytes and gametes, localizes to the cell membrane. In stage V male gametocytes, localizes to the cell membrane and in the cytoplasm. In male gametes, localizes to the residual body, cell membrane and in the flagella (PubMed:29311293). Calcium and/or autophosphorylation does not affect membrane localization (By similarity).</text>
</comment>
<comment type="developmental stage">
    <text evidence="9">Expressed during parasite asexual blood stages in schizonts and free merozoites (at protein level) (PubMed:29311293). Expressed in female and male mature gametocytes and gametes (at protein level) (PubMed:29311293).</text>
</comment>
<comment type="domain">
    <text evidence="2">The junction domain (J domain) is composed of 2 motifs that maintain the kinase inactive. The N-terminal autoinhibitory motif acts as a pseudosubstrate inhibiting the catalytic domain while the C-terminal motif binds the EF-hand domains.</text>
</comment>
<comment type="PTM">
    <text evidence="2">Myristoylated. Myristoylation, palmitoylation and the basic cluster motif are required for the localization to the parasitophorous vacuole membrane.</text>
</comment>
<comment type="PTM">
    <text evidence="2">Palmitoylated. Palmitoylation increases in merozoites in response to low level of extracellular K(+) in the host blood. Myristoylation, palmitoylation and the basic cluster motif are required for the localization to the parasitophorous vacuole membrane.</text>
</comment>
<comment type="PTM">
    <text evidence="2 8">Phosphorylation at Ser-64 occurs at late schizont stage and regulates CDPK1 protein-protein interaction. Phosphorylated at Ser-28, Ser-34 and Ser-64 in merozoites in response to low extracellular level of K(+). Phosphorylation at Thr-231 may regulate CDPK1 kinase activity. Phosphorylation increases in response to an increase in intracellular Ca(2+) levels (By similarity). Autophosphorylated in vitro (PubMed:27923926). Autophosphorylation does not affect membrane localization in vitro (By similarity).</text>
</comment>
<comment type="disruption phenotype">
    <text evidence="9">Knockout in a CDPK1 T145M mutant background causes a reduced asexual growth due to a defect in invasion of host erythrocytes (PubMed:29311293). During gametogenesis, female gametocytes fail to round up upon induction and fail to exit host erythrocytes (PubMed:29311293). Male gametocytes round up normally after induction but fail to exflagellate, to form flagella and to exit host erythrocytes (PubMed:29311293). In mature schizonts, raf kinase inhibitor RKIP mRNA is up-regulated as well as several mRNAs involved in parasite sexual development (PubMed:29311293).</text>
</comment>
<comment type="similarity">
    <text evidence="11">Belongs to the protein kinase superfamily. Ser/Thr protein kinase family. CDPK subfamily.</text>
</comment>
<sequence>MGCSQSSNVKDFKTRRSKFTNGNNYGKSGNNKNSEDLAINPGMYVRKKEGKIGESYFKVRKLGSGAYGEVLLCREKHGHGEKAIKVIKKSQFDKMKYSITNKIECDDKIHEEIYNEISLLKSLDHPNIIKLFDVFEDKKYFYLVTEFYEGGELFEQIINRHKFDECDAANIMKQILSGICYLHKHNIVHRDIKPENILLENKHSLLNIKIVDFGLSSFFSKDNKLRDRLGTAYYIAPEVLRKKYNEKCDVWSCGVILYILLCGYPPFGGQNDQDIIKKVEKGKYYFDFNDWKNISEEAKELIKLMLTYDYNKRITAKEALNSKWIKKYANNINKSDQKTLCGALSNMRKFEGSQKLAQAAILFIGSKLTTLEERKELTDIFKKLDKNGDGQLDKKELIEGYNILRSFKNELGELKNVEEEVDNILKEVDFDKNGYIEYSEFISVCMDKQILFSEERLRDAFNLFDTDKSGKITKEELANLFGLTSISEQMWNEVLGEADKNKDNMIDFDEFVNMMHKICDNKSS</sequence>
<accession>A0A2I0BVG8</accession>
<keyword id="KW-0067">ATP-binding</keyword>
<keyword id="KW-0106">Calcium</keyword>
<keyword id="KW-1003">Cell membrane</keyword>
<keyword id="KW-0966">Cell projection</keyword>
<keyword id="KW-0969">Cilium</keyword>
<keyword id="KW-0963">Cytoplasm</keyword>
<keyword id="KW-0282">Flagellum</keyword>
<keyword id="KW-1032">Host cell membrane</keyword>
<keyword id="KW-1043">Host membrane</keyword>
<keyword id="KW-0418">Kinase</keyword>
<keyword id="KW-0449">Lipoprotein</keyword>
<keyword id="KW-0460">Magnesium</keyword>
<keyword id="KW-0472">Membrane</keyword>
<keyword id="KW-0479">Metal-binding</keyword>
<keyword id="KW-0519">Myristate</keyword>
<keyword id="KW-0547">Nucleotide-binding</keyword>
<keyword id="KW-0564">Palmitate</keyword>
<keyword id="KW-0597">Phosphoprotein</keyword>
<keyword id="KW-0677">Repeat</keyword>
<keyword id="KW-0723">Serine/threonine-protein kinase</keyword>
<keyword id="KW-0808">Transferase</keyword>
<gene>
    <name evidence="10" type="primary">PDCK1</name>
    <name evidence="12" type="ORF">CK202_3261</name>
</gene>
<reference evidence="13" key="1">
    <citation type="submission" date="2017-11" db="EMBL/GenBank/DDBJ databases">
        <title>Plasmodium falciparum NF54 genome assembly.</title>
        <authorList>
            <person name="Bryant J.M."/>
            <person name="Baumgarten S."/>
            <person name="Scheidig-Benatar C."/>
            <person name="Scherf A."/>
        </authorList>
    </citation>
    <scope>NUCLEOTIDE SEQUENCE [LARGE SCALE GENOMIC DNA]</scope>
    <source>
        <strain evidence="13">NF54</strain>
    </source>
</reference>
<reference evidence="11" key="2">
    <citation type="journal article" date="2016" name="MBio">
        <title>Reduced Activity of Mutant Calcium-Dependent Protein Kinase 1 Is Compensated in Plasmodium falciparum through the Action of Protein Kinase G.</title>
        <authorList>
            <person name="Bansal A."/>
            <person name="Ojo K.K."/>
            <person name="Mu J."/>
            <person name="Maly D.J."/>
            <person name="Van Voorhis W.C."/>
            <person name="Miller L.H."/>
        </authorList>
    </citation>
    <scope>FUNCTION</scope>
    <scope>CATALYTIC ACTIVITY</scope>
    <scope>COFACTOR</scope>
    <scope>ACTIVITY REGULATION</scope>
    <scope>PHOSPHORYLATION</scope>
    <scope>MUTAGENESIS OF THR-145</scope>
</reference>
<reference evidence="11" key="3">
    <citation type="journal article" date="2018" name="Proc. Natl. Acad. Sci. U.S.A.">
        <title>PfCDPK1 is critical for malaria parasite gametogenesis and mosquito infection.</title>
        <authorList>
            <person name="Bansal A."/>
            <person name="Molina-Cruz A."/>
            <person name="Brzostowski J."/>
            <person name="Liu P."/>
            <person name="Luo Y."/>
            <person name="Gunalan K."/>
            <person name="Li Y."/>
            <person name="Ribeiro J.M.C."/>
            <person name="Miller L.H."/>
        </authorList>
    </citation>
    <scope>FUNCTION</scope>
    <scope>SUBCELLULAR LOCATION</scope>
    <scope>DEVELOPMENTAL STAGE</scope>
    <scope>DISRUPTION PHENOTYPE</scope>
    <scope>MUTAGENESIS OF THR-145</scope>
</reference>
<proteinExistence type="evidence at protein level"/>
<protein>
    <recommendedName>
        <fullName evidence="10">Calcium-dependent protein kinase 1</fullName>
        <ecNumber evidence="8">2.7.11.1</ecNumber>
    </recommendedName>
    <alternativeName>
        <fullName evidence="10">PfCDPK1</fullName>
    </alternativeName>
</protein>
<feature type="initiator methionine" description="Removed" evidence="2">
    <location>
        <position position="1"/>
    </location>
</feature>
<feature type="chain" id="PRO_0000453003" description="Calcium-dependent protein kinase 1">
    <location>
        <begin position="2"/>
        <end position="524"/>
    </location>
</feature>
<feature type="domain" description="Protein kinase" evidence="3">
    <location>
        <begin position="56"/>
        <end position="325"/>
    </location>
</feature>
<feature type="domain" description="EF-hand 1" evidence="4">
    <location>
        <begin position="372"/>
        <end position="407"/>
    </location>
</feature>
<feature type="domain" description="EF-hand 2" evidence="4">
    <location>
        <begin position="416"/>
        <end position="451"/>
    </location>
</feature>
<feature type="domain" description="EF-hand 3" evidence="4">
    <location>
        <begin position="452"/>
        <end position="487"/>
    </location>
</feature>
<feature type="domain" description="EF-hand 4" evidence="4">
    <location>
        <begin position="488"/>
        <end position="521"/>
    </location>
</feature>
<feature type="region of interest" description="Disordered" evidence="7">
    <location>
        <begin position="1"/>
        <end position="34"/>
    </location>
</feature>
<feature type="region of interest" description="J domain" evidence="2">
    <location>
        <begin position="346"/>
        <end position="364"/>
    </location>
</feature>
<feature type="short sequence motif" description="Basic cluster involved in membrane binding" evidence="2">
    <location>
        <begin position="10"/>
        <end position="20"/>
    </location>
</feature>
<feature type="short sequence motif" description="J domain autoinhibitory motif" evidence="2">
    <location>
        <begin position="346"/>
        <end position="353"/>
    </location>
</feature>
<feature type="short sequence motif" description="J domain interacts with the EF-hand domains" evidence="2">
    <location>
        <begin position="354"/>
        <end position="364"/>
    </location>
</feature>
<feature type="compositionally biased region" description="Low complexity" evidence="7">
    <location>
        <begin position="21"/>
        <end position="32"/>
    </location>
</feature>
<feature type="active site" description="Proton acceptor" evidence="5">
    <location>
        <position position="191"/>
    </location>
</feature>
<feature type="binding site" evidence="3">
    <location>
        <begin position="62"/>
        <end position="70"/>
    </location>
    <ligand>
        <name>ATP</name>
        <dbReference type="ChEBI" id="CHEBI:30616"/>
    </ligand>
</feature>
<feature type="binding site" evidence="3">
    <location>
        <position position="85"/>
    </location>
    <ligand>
        <name>ATP</name>
        <dbReference type="ChEBI" id="CHEBI:30616"/>
    </ligand>
</feature>
<feature type="binding site" evidence="6">
    <location>
        <position position="89"/>
    </location>
    <ligand>
        <name>ATP</name>
        <dbReference type="ChEBI" id="CHEBI:30616"/>
    </ligand>
</feature>
<feature type="binding site" evidence="4">
    <location>
        <position position="385"/>
    </location>
    <ligand>
        <name>Ca(2+)</name>
        <dbReference type="ChEBI" id="CHEBI:29108"/>
        <label>1</label>
    </ligand>
</feature>
<feature type="binding site" evidence="4">
    <location>
        <position position="387"/>
    </location>
    <ligand>
        <name>Ca(2+)</name>
        <dbReference type="ChEBI" id="CHEBI:29108"/>
        <label>1</label>
    </ligand>
</feature>
<feature type="binding site" evidence="4">
    <location>
        <position position="389"/>
    </location>
    <ligand>
        <name>Ca(2+)</name>
        <dbReference type="ChEBI" id="CHEBI:29108"/>
        <label>1</label>
    </ligand>
</feature>
<feature type="binding site" evidence="4">
    <location>
        <position position="391"/>
    </location>
    <ligand>
        <name>Ca(2+)</name>
        <dbReference type="ChEBI" id="CHEBI:29108"/>
        <label>1</label>
    </ligand>
</feature>
<feature type="binding site" evidence="4">
    <location>
        <position position="396"/>
    </location>
    <ligand>
        <name>Ca(2+)</name>
        <dbReference type="ChEBI" id="CHEBI:29108"/>
        <label>1</label>
    </ligand>
</feature>
<feature type="binding site" evidence="4">
    <location>
        <position position="429"/>
    </location>
    <ligand>
        <name>Ca(2+)</name>
        <dbReference type="ChEBI" id="CHEBI:29108"/>
        <label>2</label>
    </ligand>
</feature>
<feature type="binding site" evidence="4">
    <location>
        <position position="431"/>
    </location>
    <ligand>
        <name>Ca(2+)</name>
        <dbReference type="ChEBI" id="CHEBI:29108"/>
        <label>2</label>
    </ligand>
</feature>
<feature type="binding site" evidence="4">
    <location>
        <position position="433"/>
    </location>
    <ligand>
        <name>Ca(2+)</name>
        <dbReference type="ChEBI" id="CHEBI:29108"/>
        <label>2</label>
    </ligand>
</feature>
<feature type="binding site" evidence="4">
    <location>
        <position position="435"/>
    </location>
    <ligand>
        <name>Ca(2+)</name>
        <dbReference type="ChEBI" id="CHEBI:29108"/>
        <label>2</label>
    </ligand>
</feature>
<feature type="binding site" evidence="4">
    <location>
        <position position="440"/>
    </location>
    <ligand>
        <name>Ca(2+)</name>
        <dbReference type="ChEBI" id="CHEBI:29108"/>
        <label>2</label>
    </ligand>
</feature>
<feature type="binding site" evidence="4">
    <location>
        <position position="465"/>
    </location>
    <ligand>
        <name>Ca(2+)</name>
        <dbReference type="ChEBI" id="CHEBI:29108"/>
        <label>3</label>
    </ligand>
</feature>
<feature type="binding site" evidence="4">
    <location>
        <position position="467"/>
    </location>
    <ligand>
        <name>Ca(2+)</name>
        <dbReference type="ChEBI" id="CHEBI:29108"/>
        <label>3</label>
    </ligand>
</feature>
<feature type="binding site" evidence="4">
    <location>
        <position position="469"/>
    </location>
    <ligand>
        <name>Ca(2+)</name>
        <dbReference type="ChEBI" id="CHEBI:29108"/>
        <label>3</label>
    </ligand>
</feature>
<feature type="binding site" evidence="4">
    <location>
        <position position="471"/>
    </location>
    <ligand>
        <name>Ca(2+)</name>
        <dbReference type="ChEBI" id="CHEBI:29108"/>
        <label>3</label>
    </ligand>
</feature>
<feature type="binding site" evidence="4">
    <location>
        <position position="476"/>
    </location>
    <ligand>
        <name>Ca(2+)</name>
        <dbReference type="ChEBI" id="CHEBI:29108"/>
        <label>3</label>
    </ligand>
</feature>
<feature type="binding site" evidence="4">
    <location>
        <position position="499"/>
    </location>
    <ligand>
        <name>Ca(2+)</name>
        <dbReference type="ChEBI" id="CHEBI:29108"/>
        <label>4</label>
    </ligand>
</feature>
<feature type="binding site" evidence="4">
    <location>
        <position position="501"/>
    </location>
    <ligand>
        <name>Ca(2+)</name>
        <dbReference type="ChEBI" id="CHEBI:29108"/>
        <label>4</label>
    </ligand>
</feature>
<feature type="binding site" evidence="4">
    <location>
        <position position="503"/>
    </location>
    <ligand>
        <name>Ca(2+)</name>
        <dbReference type="ChEBI" id="CHEBI:29108"/>
        <label>4</label>
    </ligand>
</feature>
<feature type="binding site" evidence="4">
    <location>
        <position position="505"/>
    </location>
    <ligand>
        <name>Ca(2+)</name>
        <dbReference type="ChEBI" id="CHEBI:29108"/>
        <label>4</label>
    </ligand>
</feature>
<feature type="binding site" evidence="4">
    <location>
        <position position="510"/>
    </location>
    <ligand>
        <name>Ca(2+)</name>
        <dbReference type="ChEBI" id="CHEBI:29108"/>
        <label>4</label>
    </ligand>
</feature>
<feature type="modified residue" description="Phosphoserine" evidence="2">
    <location>
        <position position="17"/>
    </location>
</feature>
<feature type="modified residue" description="Phosphoserine" evidence="2">
    <location>
        <position position="28"/>
    </location>
</feature>
<feature type="modified residue" description="Phosphoserine" evidence="2">
    <location>
        <position position="34"/>
    </location>
</feature>
<feature type="modified residue" description="Phosphoserine" evidence="2">
    <location>
        <position position="64"/>
    </location>
</feature>
<feature type="modified residue" description="Phosphothreonine" evidence="2">
    <location>
        <position position="100"/>
    </location>
</feature>
<feature type="modified residue" description="Phosphoserine" evidence="2">
    <location>
        <position position="118"/>
    </location>
</feature>
<feature type="modified residue" description="Phosphoserine" evidence="2">
    <location>
        <position position="217"/>
    </location>
</feature>
<feature type="modified residue" description="Phosphoserine" evidence="2">
    <location>
        <position position="220"/>
    </location>
</feature>
<feature type="modified residue" description="Phosphothreonine" evidence="2">
    <location>
        <position position="231"/>
    </location>
</feature>
<feature type="modified residue" description="Phosphoserine" evidence="2">
    <location>
        <position position="335"/>
    </location>
</feature>
<feature type="lipid moiety-binding region" description="N-myristoyl glycine" evidence="2">
    <location>
        <position position="2"/>
    </location>
</feature>
<feature type="lipid moiety-binding region" description="S-palmitoyl cysteine" evidence="2">
    <location>
        <position position="3"/>
    </location>
</feature>
<feature type="mutagenesis site" description="Severe loss of catalytic activity." evidence="8">
    <original>T</original>
    <variation>A</variation>
    <variation>G</variation>
    <variation>Y</variation>
    <variation>S</variation>
    <location>
        <position position="145"/>
    </location>
</feature>
<feature type="mutagenesis site" description="47% reduction in catalytic activity. Asexual blood stage growth is normal. CDPK5 and CDPK6 mRNA are moderately up-regulated while CDPK2, CDPK7 and PKA mRNAs are slightly down-regulated." evidence="8 9">
    <original>T</original>
    <variation>M</variation>
    <location>
        <position position="145"/>
    </location>
</feature>
<evidence type="ECO:0000250" key="1">
    <source>
        <dbReference type="UniProtKB" id="P62343"/>
    </source>
</evidence>
<evidence type="ECO:0000250" key="2">
    <source>
        <dbReference type="UniProtKB" id="P62344"/>
    </source>
</evidence>
<evidence type="ECO:0000255" key="3">
    <source>
        <dbReference type="PROSITE-ProRule" id="PRU00159"/>
    </source>
</evidence>
<evidence type="ECO:0000255" key="4">
    <source>
        <dbReference type="PROSITE-ProRule" id="PRU00448"/>
    </source>
</evidence>
<evidence type="ECO:0000255" key="5">
    <source>
        <dbReference type="PROSITE-ProRule" id="PRU10027"/>
    </source>
</evidence>
<evidence type="ECO:0000255" key="6">
    <source>
        <dbReference type="PROSITE-ProRule" id="PRU10141"/>
    </source>
</evidence>
<evidence type="ECO:0000256" key="7">
    <source>
        <dbReference type="SAM" id="MobiDB-lite"/>
    </source>
</evidence>
<evidence type="ECO:0000269" key="8">
    <source>
    </source>
</evidence>
<evidence type="ECO:0000269" key="9">
    <source>
    </source>
</evidence>
<evidence type="ECO:0000303" key="10">
    <source>
    </source>
</evidence>
<evidence type="ECO:0000305" key="11"/>
<evidence type="ECO:0000312" key="12">
    <source>
        <dbReference type="EMBL" id="PKC46465.1"/>
    </source>
</evidence>
<evidence type="ECO:0000312" key="13">
    <source>
        <dbReference type="Proteomes" id="UP000232684"/>
    </source>
</evidence>
<organism evidence="13">
    <name type="scientific">Plasmodium falciparum (isolate NF54)</name>
    <dbReference type="NCBI Taxonomy" id="5843"/>
    <lineage>
        <taxon>Eukaryota</taxon>
        <taxon>Sar</taxon>
        <taxon>Alveolata</taxon>
        <taxon>Apicomplexa</taxon>
        <taxon>Aconoidasida</taxon>
        <taxon>Haemosporida</taxon>
        <taxon>Plasmodiidae</taxon>
        <taxon>Plasmodium</taxon>
        <taxon>Plasmodium (Laverania)</taxon>
    </lineage>
</organism>
<name>CDPK1_PLAFO</name>